<evidence type="ECO:0000255" key="1">
    <source>
        <dbReference type="PROSITE-ProRule" id="PRU10011"/>
    </source>
</evidence>
<evidence type="ECO:0000305" key="2"/>
<evidence type="ECO:0007829" key="3">
    <source>
        <dbReference type="PDB" id="6YEH"/>
    </source>
</evidence>
<evidence type="ECO:0007829" key="4">
    <source>
        <dbReference type="PDB" id="6YEI"/>
    </source>
</evidence>
<proteinExistence type="evidence at protein level"/>
<organism>
    <name type="scientific">Arabidopsis thaliana</name>
    <name type="common">Mouse-ear cress</name>
    <dbReference type="NCBI Taxonomy" id="3702"/>
    <lineage>
        <taxon>Eukaryota</taxon>
        <taxon>Viridiplantae</taxon>
        <taxon>Streptophyta</taxon>
        <taxon>Embryophyta</taxon>
        <taxon>Tracheophyta</taxon>
        <taxon>Spermatophyta</taxon>
        <taxon>Magnoliopsida</taxon>
        <taxon>eudicotyledons</taxon>
        <taxon>Gunneridae</taxon>
        <taxon>Pentapetalae</taxon>
        <taxon>rosids</taxon>
        <taxon>malvids</taxon>
        <taxon>Brassicales</taxon>
        <taxon>Brassicaceae</taxon>
        <taxon>Camelineae</taxon>
        <taxon>Arabidopsis</taxon>
    </lineage>
</organism>
<comment type="catalytic activity">
    <reaction evidence="1">
        <text>L-glutamate + NAD(+) + H2O = 2-oxoglutarate + NH4(+) + NADH + H(+)</text>
        <dbReference type="Rhea" id="RHEA:15133"/>
        <dbReference type="ChEBI" id="CHEBI:15377"/>
        <dbReference type="ChEBI" id="CHEBI:15378"/>
        <dbReference type="ChEBI" id="CHEBI:16810"/>
        <dbReference type="ChEBI" id="CHEBI:28938"/>
        <dbReference type="ChEBI" id="CHEBI:29985"/>
        <dbReference type="ChEBI" id="CHEBI:57540"/>
        <dbReference type="ChEBI" id="CHEBI:57945"/>
        <dbReference type="EC" id="1.4.1.3"/>
    </reaction>
</comment>
<comment type="catalytic activity">
    <reaction evidence="1">
        <text>L-glutamate + NADP(+) + H2O = 2-oxoglutarate + NH4(+) + NADPH + H(+)</text>
        <dbReference type="Rhea" id="RHEA:11612"/>
        <dbReference type="ChEBI" id="CHEBI:15377"/>
        <dbReference type="ChEBI" id="CHEBI:15378"/>
        <dbReference type="ChEBI" id="CHEBI:16810"/>
        <dbReference type="ChEBI" id="CHEBI:28938"/>
        <dbReference type="ChEBI" id="CHEBI:29985"/>
        <dbReference type="ChEBI" id="CHEBI:57783"/>
        <dbReference type="ChEBI" id="CHEBI:58349"/>
        <dbReference type="EC" id="1.4.1.3"/>
    </reaction>
</comment>
<comment type="similarity">
    <text evidence="2">Belongs to the Glu/Leu/Phe/Val dehydrogenases family.</text>
</comment>
<accession>Q43314</accession>
<keyword id="KW-0002">3D-structure</keyword>
<keyword id="KW-0520">NAD</keyword>
<keyword id="KW-0560">Oxidoreductase</keyword>
<keyword id="KW-1185">Reference proteome</keyword>
<reference key="1">
    <citation type="submission" date="1995-12" db="EMBL/GenBank/DDBJ databases">
        <title>Arabidopsis glutamate dehydrogenase 1.</title>
        <authorList>
            <person name="Thakkar S."/>
            <person name="Weisemann J.M."/>
            <person name="Turano F.J."/>
        </authorList>
    </citation>
    <scope>NUCLEOTIDE SEQUENCE [MRNA]</scope>
</reference>
<reference key="2">
    <citation type="submission" date="1996-05" db="EMBL/GenBank/DDBJ databases">
        <title>Arabidopsis mutant analysis and gene regulation define a nonredundant role for glutamate dehydrogenase in nitrogen assimilation.</title>
        <authorList>
            <person name="Melo-Oliveira R."/>
            <person name="Oliveira I."/>
            <person name="Coruzzi G."/>
        </authorList>
    </citation>
    <scope>NUCLEOTIDE SEQUENCE [MRNA]</scope>
    <source>
        <strain>cv. Columbia</strain>
    </source>
</reference>
<reference key="3">
    <citation type="journal article" date="1998" name="DNA Res.">
        <title>Structural analysis of Arabidopsis thaliana chromosome 5. VI. Sequence features of the regions of 1,367,185 bp covered by 19 physically assigned P1 and TAC clones.</title>
        <authorList>
            <person name="Kotani H."/>
            <person name="Nakamura Y."/>
            <person name="Sato S."/>
            <person name="Asamizu E."/>
            <person name="Kaneko T."/>
            <person name="Miyajima N."/>
            <person name="Tabata S."/>
        </authorList>
    </citation>
    <scope>NUCLEOTIDE SEQUENCE [LARGE SCALE GENOMIC DNA]</scope>
    <source>
        <strain>cv. Columbia</strain>
    </source>
</reference>
<reference key="4">
    <citation type="journal article" date="2017" name="Plant J.">
        <title>Araport11: a complete reannotation of the Arabidopsis thaliana reference genome.</title>
        <authorList>
            <person name="Cheng C.Y."/>
            <person name="Krishnakumar V."/>
            <person name="Chan A.P."/>
            <person name="Thibaud-Nissen F."/>
            <person name="Schobel S."/>
            <person name="Town C.D."/>
        </authorList>
    </citation>
    <scope>GENOME REANNOTATION</scope>
    <source>
        <strain>cv. Columbia</strain>
    </source>
</reference>
<dbReference type="EC" id="1.4.1.3"/>
<dbReference type="EMBL" id="U37771">
    <property type="protein sequence ID" value="AAA82615.1"/>
    <property type="molecule type" value="mRNA"/>
</dbReference>
<dbReference type="EMBL" id="U53527">
    <property type="protein sequence ID" value="AAB08057.1"/>
    <property type="molecule type" value="mRNA"/>
</dbReference>
<dbReference type="EMBL" id="AB012246">
    <property type="protein sequence ID" value="BAB09475.1"/>
    <property type="molecule type" value="Genomic_DNA"/>
</dbReference>
<dbReference type="EMBL" id="CP002688">
    <property type="protein sequence ID" value="AED92515.1"/>
    <property type="molecule type" value="Genomic_DNA"/>
</dbReference>
<dbReference type="PIR" id="S71217">
    <property type="entry name" value="S71217"/>
</dbReference>
<dbReference type="RefSeq" id="NP_197318.1">
    <property type="nucleotide sequence ID" value="NM_121822.4"/>
</dbReference>
<dbReference type="PDB" id="6YEH">
    <property type="method" value="X-ray"/>
    <property type="resolution" value="2.59 A"/>
    <property type="chains" value="A/B/C/D/E/F=1-411"/>
</dbReference>
<dbReference type="PDB" id="6YEI">
    <property type="method" value="X-ray"/>
    <property type="resolution" value="2.02 A"/>
    <property type="chains" value="A/B/C/D/E/F=1-411"/>
</dbReference>
<dbReference type="PDBsum" id="6YEH"/>
<dbReference type="PDBsum" id="6YEI"/>
<dbReference type="SMR" id="Q43314"/>
<dbReference type="BioGRID" id="17211">
    <property type="interactions" value="7"/>
</dbReference>
<dbReference type="FunCoup" id="Q43314">
    <property type="interactions" value="1991"/>
</dbReference>
<dbReference type="IntAct" id="Q43314">
    <property type="interactions" value="3"/>
</dbReference>
<dbReference type="STRING" id="3702.Q43314"/>
<dbReference type="iPTMnet" id="Q43314"/>
<dbReference type="PaxDb" id="3702-AT5G18170.1"/>
<dbReference type="ProteomicsDB" id="224278"/>
<dbReference type="EnsemblPlants" id="AT5G18170.1">
    <property type="protein sequence ID" value="AT5G18170.1"/>
    <property type="gene ID" value="AT5G18170"/>
</dbReference>
<dbReference type="GeneID" id="831935"/>
<dbReference type="Gramene" id="AT5G18170.1">
    <property type="protein sequence ID" value="AT5G18170.1"/>
    <property type="gene ID" value="AT5G18170"/>
</dbReference>
<dbReference type="KEGG" id="ath:AT5G18170"/>
<dbReference type="Araport" id="AT5G18170"/>
<dbReference type="TAIR" id="AT5G18170">
    <property type="gene designation" value="GDH1"/>
</dbReference>
<dbReference type="eggNOG" id="KOG2250">
    <property type="taxonomic scope" value="Eukaryota"/>
</dbReference>
<dbReference type="HOGENOM" id="CLU_025763_1_2_1"/>
<dbReference type="InParanoid" id="Q43314"/>
<dbReference type="OMA" id="FYKGGIR"/>
<dbReference type="OrthoDB" id="6718861at2759"/>
<dbReference type="PhylomeDB" id="Q43314"/>
<dbReference type="BioCyc" id="ARA:AT5G18170-MONOMER"/>
<dbReference type="BRENDA" id="1.4.1.3">
    <property type="organism ID" value="399"/>
</dbReference>
<dbReference type="CD-CODE" id="4299E36E">
    <property type="entry name" value="Nucleolus"/>
</dbReference>
<dbReference type="PRO" id="PR:Q43314"/>
<dbReference type="Proteomes" id="UP000006548">
    <property type="component" value="Chromosome 5"/>
</dbReference>
<dbReference type="ExpressionAtlas" id="Q43314">
    <property type="expression patterns" value="baseline and differential"/>
</dbReference>
<dbReference type="GO" id="GO:0005739">
    <property type="term" value="C:mitochondrion"/>
    <property type="evidence" value="ECO:0000314"/>
    <property type="project" value="TAIR"/>
</dbReference>
<dbReference type="GO" id="GO:0009536">
    <property type="term" value="C:plastid"/>
    <property type="evidence" value="ECO:0007005"/>
    <property type="project" value="TAIR"/>
</dbReference>
<dbReference type="GO" id="GO:0005524">
    <property type="term" value="F:ATP binding"/>
    <property type="evidence" value="ECO:0007005"/>
    <property type="project" value="TAIR"/>
</dbReference>
<dbReference type="GO" id="GO:0050897">
    <property type="term" value="F:cobalt ion binding"/>
    <property type="evidence" value="ECO:0007005"/>
    <property type="project" value="TAIR"/>
</dbReference>
<dbReference type="GO" id="GO:0005507">
    <property type="term" value="F:copper ion binding"/>
    <property type="evidence" value="ECO:0007005"/>
    <property type="project" value="TAIR"/>
</dbReference>
<dbReference type="GO" id="GO:0004352">
    <property type="term" value="F:glutamate dehydrogenase (NAD+) activity"/>
    <property type="evidence" value="ECO:0007669"/>
    <property type="project" value="RHEA"/>
</dbReference>
<dbReference type="GO" id="GO:0004354">
    <property type="term" value="F:glutamate dehydrogenase (NADP+) activity"/>
    <property type="evidence" value="ECO:0007669"/>
    <property type="project" value="RHEA"/>
</dbReference>
<dbReference type="GO" id="GO:0004353">
    <property type="term" value="F:glutamate dehydrogenase [NAD(P)+] activity"/>
    <property type="evidence" value="ECO:0000314"/>
    <property type="project" value="TAIR"/>
</dbReference>
<dbReference type="GO" id="GO:0008270">
    <property type="term" value="F:zinc ion binding"/>
    <property type="evidence" value="ECO:0007005"/>
    <property type="project" value="TAIR"/>
</dbReference>
<dbReference type="GO" id="GO:0006520">
    <property type="term" value="P:amino acid metabolic process"/>
    <property type="evidence" value="ECO:0007669"/>
    <property type="project" value="InterPro"/>
</dbReference>
<dbReference type="GO" id="GO:0009646">
    <property type="term" value="P:response to absence of light"/>
    <property type="evidence" value="ECO:0000270"/>
    <property type="project" value="TAIR"/>
</dbReference>
<dbReference type="CDD" id="cd01076">
    <property type="entry name" value="NAD_bind_1_Glu_DH"/>
    <property type="match status" value="1"/>
</dbReference>
<dbReference type="FunFam" id="3.40.50.10860:FF:000003">
    <property type="entry name" value="Glutamate dehydrogenase"/>
    <property type="match status" value="1"/>
</dbReference>
<dbReference type="FunFam" id="3.40.50.720:FF:000212">
    <property type="entry name" value="Glutamate dehydrogenase"/>
    <property type="match status" value="1"/>
</dbReference>
<dbReference type="Gene3D" id="3.40.50.10860">
    <property type="entry name" value="Leucine Dehydrogenase, chain A, domain 1"/>
    <property type="match status" value="1"/>
</dbReference>
<dbReference type="Gene3D" id="3.40.50.720">
    <property type="entry name" value="NAD(P)-binding Rossmann-like Domain"/>
    <property type="match status" value="1"/>
</dbReference>
<dbReference type="InterPro" id="IPR046346">
    <property type="entry name" value="Aminoacid_DH-like_N_sf"/>
</dbReference>
<dbReference type="InterPro" id="IPR006095">
    <property type="entry name" value="Glu/Leu/Phe/Val/Trp_DH"/>
</dbReference>
<dbReference type="InterPro" id="IPR006096">
    <property type="entry name" value="Glu/Leu/Phe/Val/Trp_DH_C"/>
</dbReference>
<dbReference type="InterPro" id="IPR006097">
    <property type="entry name" value="Glu/Leu/Phe/Val/Trp_DH_dimer"/>
</dbReference>
<dbReference type="InterPro" id="IPR033524">
    <property type="entry name" value="Glu/Leu/Phe/Val_DH_AS"/>
</dbReference>
<dbReference type="InterPro" id="IPR014362">
    <property type="entry name" value="Glu_DH"/>
</dbReference>
<dbReference type="InterPro" id="IPR036291">
    <property type="entry name" value="NAD(P)-bd_dom_sf"/>
</dbReference>
<dbReference type="InterPro" id="IPR033922">
    <property type="entry name" value="NAD_bind_Glu_DH"/>
</dbReference>
<dbReference type="PANTHER" id="PTHR11606">
    <property type="entry name" value="GLUTAMATE DEHYDROGENASE"/>
    <property type="match status" value="1"/>
</dbReference>
<dbReference type="PANTHER" id="PTHR11606:SF30">
    <property type="entry name" value="GLUTAMATE DEHYDROGENASE 1"/>
    <property type="match status" value="1"/>
</dbReference>
<dbReference type="Pfam" id="PF00208">
    <property type="entry name" value="ELFV_dehydrog"/>
    <property type="match status" value="1"/>
</dbReference>
<dbReference type="Pfam" id="PF02812">
    <property type="entry name" value="ELFV_dehydrog_N"/>
    <property type="match status" value="1"/>
</dbReference>
<dbReference type="PIRSF" id="PIRSF000185">
    <property type="entry name" value="Glu_DH"/>
    <property type="match status" value="1"/>
</dbReference>
<dbReference type="PRINTS" id="PR00082">
    <property type="entry name" value="GLFDHDRGNASE"/>
</dbReference>
<dbReference type="SMART" id="SM00839">
    <property type="entry name" value="ELFV_dehydrog"/>
    <property type="match status" value="1"/>
</dbReference>
<dbReference type="SUPFAM" id="SSF53223">
    <property type="entry name" value="Aminoacid dehydrogenase-like, N-terminal domain"/>
    <property type="match status" value="1"/>
</dbReference>
<dbReference type="SUPFAM" id="SSF51735">
    <property type="entry name" value="NAD(P)-binding Rossmann-fold domains"/>
    <property type="match status" value="1"/>
</dbReference>
<dbReference type="PROSITE" id="PS00074">
    <property type="entry name" value="GLFV_DEHYDROGENASE"/>
    <property type="match status" value="1"/>
</dbReference>
<feature type="chain" id="PRO_0000182745" description="Glutamate dehydrogenase 1">
    <location>
        <begin position="1"/>
        <end position="411"/>
    </location>
</feature>
<feature type="active site" evidence="1">
    <location>
        <position position="102"/>
    </location>
</feature>
<feature type="helix" evidence="4">
    <location>
        <begin position="4"/>
        <end position="17"/>
    </location>
</feature>
<feature type="helix" evidence="4">
    <location>
        <begin position="22"/>
        <end position="29"/>
    </location>
</feature>
<feature type="strand" evidence="4">
    <location>
        <begin position="32"/>
        <end position="42"/>
    </location>
</feature>
<feature type="strand" evidence="4">
    <location>
        <begin position="48"/>
        <end position="57"/>
    </location>
</feature>
<feature type="strand" evidence="4">
    <location>
        <begin position="63"/>
        <end position="71"/>
    </location>
</feature>
<feature type="helix" evidence="4">
    <location>
        <begin position="77"/>
        <end position="94"/>
    </location>
</feature>
<feature type="strand" evidence="4">
    <location>
        <begin position="99"/>
        <end position="105"/>
    </location>
</feature>
<feature type="helix" evidence="4">
    <location>
        <begin position="109"/>
        <end position="111"/>
    </location>
</feature>
<feature type="helix" evidence="4">
    <location>
        <begin position="114"/>
        <end position="128"/>
    </location>
</feature>
<feature type="helix" evidence="4">
    <location>
        <begin position="129"/>
        <end position="131"/>
    </location>
</feature>
<feature type="turn" evidence="4">
    <location>
        <begin position="134"/>
        <end position="136"/>
    </location>
</feature>
<feature type="strand" evidence="4">
    <location>
        <begin position="137"/>
        <end position="141"/>
    </location>
</feature>
<feature type="helix" evidence="4">
    <location>
        <begin position="147"/>
        <end position="161"/>
    </location>
</feature>
<feature type="helix" evidence="4">
    <location>
        <begin position="165"/>
        <end position="167"/>
    </location>
</feature>
<feature type="strand" evidence="3">
    <location>
        <begin position="168"/>
        <end position="170"/>
    </location>
</feature>
<feature type="helix" evidence="4">
    <location>
        <begin position="173"/>
        <end position="175"/>
    </location>
</feature>
<feature type="turn" evidence="4">
    <location>
        <begin position="179"/>
        <end position="183"/>
    </location>
</feature>
<feature type="helix" evidence="4">
    <location>
        <begin position="184"/>
        <end position="199"/>
    </location>
</feature>
<feature type="strand" evidence="4">
    <location>
        <begin position="208"/>
        <end position="212"/>
    </location>
</feature>
<feature type="helix" evidence="4">
    <location>
        <begin position="216"/>
        <end position="227"/>
    </location>
</feature>
<feature type="strand" evidence="4">
    <location>
        <begin position="231"/>
        <end position="237"/>
    </location>
</feature>
<feature type="strand" evidence="4">
    <location>
        <begin position="240"/>
        <end position="243"/>
    </location>
</feature>
<feature type="helix" evidence="4">
    <location>
        <begin position="250"/>
        <end position="259"/>
    </location>
</feature>
<feature type="strand" evidence="4">
    <location>
        <begin position="260"/>
        <end position="263"/>
    </location>
</feature>
<feature type="strand" evidence="4">
    <location>
        <begin position="269"/>
        <end position="272"/>
    </location>
</feature>
<feature type="helix" evidence="4">
    <location>
        <begin position="274"/>
        <end position="279"/>
    </location>
</feature>
<feature type="strand" evidence="4">
    <location>
        <begin position="283"/>
        <end position="287"/>
    </location>
</feature>
<feature type="turn" evidence="4">
    <location>
        <begin position="296"/>
        <end position="298"/>
    </location>
</feature>
<feature type="helix" evidence="4">
    <location>
        <begin position="299"/>
        <end position="301"/>
    </location>
</feature>
<feature type="strand" evidence="4">
    <location>
        <begin position="305"/>
        <end position="308"/>
    </location>
</feature>
<feature type="strand" evidence="4">
    <location>
        <begin position="311"/>
        <end position="313"/>
    </location>
</feature>
<feature type="helix" evidence="4">
    <location>
        <begin position="317"/>
        <end position="325"/>
    </location>
</feature>
<feature type="strand" evidence="4">
    <location>
        <begin position="329"/>
        <end position="331"/>
    </location>
</feature>
<feature type="helix" evidence="4">
    <location>
        <begin position="333"/>
        <end position="336"/>
    </location>
</feature>
<feature type="helix" evidence="4">
    <location>
        <begin position="339"/>
        <end position="352"/>
    </location>
</feature>
<feature type="helix" evidence="4">
    <location>
        <begin position="359"/>
        <end position="384"/>
    </location>
</feature>
<feature type="helix" evidence="4">
    <location>
        <begin position="388"/>
        <end position="407"/>
    </location>
</feature>
<gene>
    <name type="primary">GDH1</name>
    <name type="ordered locus">At5g18170</name>
    <name type="ORF">MRG7.13</name>
</gene>
<name>DHE1_ARATH</name>
<sequence length="411" mass="44524">MNALAATNRNFKLAARLLGLDSKLEKSLLIPFREIKVECTIPKDDGTLASFVGFRVQHDNARGPMKGGIRYHPEVDPDEVNALAQLMTWKTAVAKIPYGGAKGGIGCDPSKLSISELERLTRVFTQKIHDLIGIHTDVPAPDMGTGPQTMAWILDEYSKFHGYSPAVVTGKPIDLGGSLGRDAATGRGVMFGTEALLNEHGKTISGQRFVIQGFGNVGSWAAKLISEKGGKIVAVSDITGAIKNKDGIDIPALLKHTKEHRGVKGFDGADPIDPNSILVEDCDILVPAALGGVINRENANEIKAKFIIEAANHPTDPDADEILSKKGVVILPDIYANSGGVTVSYFEWVQNIQGFMWEEEKVNDELKTYMTRSFKDLKEMCKTHSCDLRMGAFTLGVNRVAQATILRGWGA</sequence>
<protein>
    <recommendedName>
        <fullName>Glutamate dehydrogenase 1</fullName>
        <shortName>GDH 1</shortName>
        <ecNumber>1.4.1.3</ecNumber>
    </recommendedName>
</protein>